<reference key="1">
    <citation type="journal article" date="2009" name="Appl. Environ. Microbiol.">
        <title>Three genomes from the phylum Acidobacteria provide insight into the lifestyles of these microorganisms in soils.</title>
        <authorList>
            <person name="Ward N.L."/>
            <person name="Challacombe J.F."/>
            <person name="Janssen P.H."/>
            <person name="Henrissat B."/>
            <person name="Coutinho P.M."/>
            <person name="Wu M."/>
            <person name="Xie G."/>
            <person name="Haft D.H."/>
            <person name="Sait M."/>
            <person name="Badger J."/>
            <person name="Barabote R.D."/>
            <person name="Bradley B."/>
            <person name="Brettin T.S."/>
            <person name="Brinkac L.M."/>
            <person name="Bruce D."/>
            <person name="Creasy T."/>
            <person name="Daugherty S.C."/>
            <person name="Davidsen T.M."/>
            <person name="DeBoy R.T."/>
            <person name="Detter J.C."/>
            <person name="Dodson R.J."/>
            <person name="Durkin A.S."/>
            <person name="Ganapathy A."/>
            <person name="Gwinn-Giglio M."/>
            <person name="Han C.S."/>
            <person name="Khouri H."/>
            <person name="Kiss H."/>
            <person name="Kothari S.P."/>
            <person name="Madupu R."/>
            <person name="Nelson K.E."/>
            <person name="Nelson W.C."/>
            <person name="Paulsen I."/>
            <person name="Penn K."/>
            <person name="Ren Q."/>
            <person name="Rosovitz M.J."/>
            <person name="Selengut J.D."/>
            <person name="Shrivastava S."/>
            <person name="Sullivan S.A."/>
            <person name="Tapia R."/>
            <person name="Thompson L.S."/>
            <person name="Watkins K.L."/>
            <person name="Yang Q."/>
            <person name="Yu C."/>
            <person name="Zafar N."/>
            <person name="Zhou L."/>
            <person name="Kuske C.R."/>
        </authorList>
    </citation>
    <scope>NUCLEOTIDE SEQUENCE [LARGE SCALE GENOMIC DNA]</scope>
    <source>
        <strain>Ellin345</strain>
    </source>
</reference>
<keyword id="KW-0227">DNA damage</keyword>
<keyword id="KW-0233">DNA recombination</keyword>
<keyword id="KW-0234">DNA repair</keyword>
<keyword id="KW-0238">DNA-binding</keyword>
<keyword id="KW-1185">Reference proteome</keyword>
<name>KU_KORVE</name>
<proteinExistence type="inferred from homology"/>
<sequence length="290" mass="32947">MAASVWSGYLTFGLISMPVRLFSGARGSRISFNQLHREDHARVKQQLVCSADGKVLERDEIVKGYEYRKGEYVIIDPEELKKIEPKTAKSMEILEFVKAEEVDPVYFETSYYLQPDEGGEKPYALLVQALKESDYMGIAKVTMHNREYTVFLRPHTSGIMLHTMYYEDEVRKMEAPKITSEVKPAEVKIAHQLIEALAGKFEPEKFHDVYEANVKKLIEAHLEGQDVEAVAKPAKPAKVVDLMDALKQSLAAMKDQKKGSRLAEVDKESTVQMTPKKPAVKERRGRKRVA</sequence>
<feature type="chain" id="PRO_0000389170" description="Non-homologous end joining protein Ku">
    <location>
        <begin position="1"/>
        <end position="290"/>
    </location>
</feature>
<feature type="domain" description="Ku" evidence="1">
    <location>
        <begin position="11"/>
        <end position="183"/>
    </location>
</feature>
<feature type="region of interest" description="Disordered" evidence="2">
    <location>
        <begin position="253"/>
        <end position="290"/>
    </location>
</feature>
<feature type="compositionally biased region" description="Basic and acidic residues" evidence="2">
    <location>
        <begin position="254"/>
        <end position="269"/>
    </location>
</feature>
<gene>
    <name evidence="1" type="primary">ku</name>
    <name type="ordered locus">Acid345_2607</name>
</gene>
<evidence type="ECO:0000255" key="1">
    <source>
        <dbReference type="HAMAP-Rule" id="MF_01875"/>
    </source>
</evidence>
<evidence type="ECO:0000256" key="2">
    <source>
        <dbReference type="SAM" id="MobiDB-lite"/>
    </source>
</evidence>
<comment type="function">
    <text evidence="1">With LigD forms a non-homologous end joining (NHEJ) DNA repair enzyme, which repairs dsDNA breaks with reduced fidelity. Binds linear dsDNA with 5'- and 3'- overhangs but not closed circular dsDNA nor ssDNA. Recruits and stimulates the ligase activity of LigD.</text>
</comment>
<comment type="subunit">
    <text evidence="1">Homodimer. Interacts with LigD.</text>
</comment>
<comment type="similarity">
    <text evidence="1">Belongs to the prokaryotic Ku family.</text>
</comment>
<dbReference type="EMBL" id="CP000360">
    <property type="protein sequence ID" value="ABF41608.1"/>
    <property type="molecule type" value="Genomic_DNA"/>
</dbReference>
<dbReference type="RefSeq" id="WP_011523409.1">
    <property type="nucleotide sequence ID" value="NC_008009.1"/>
</dbReference>
<dbReference type="SMR" id="Q1INE2"/>
<dbReference type="STRING" id="204669.Acid345_2607"/>
<dbReference type="EnsemblBacteria" id="ABF41608">
    <property type="protein sequence ID" value="ABF41608"/>
    <property type="gene ID" value="Acid345_2607"/>
</dbReference>
<dbReference type="KEGG" id="aba:Acid345_2607"/>
<dbReference type="eggNOG" id="COG1273">
    <property type="taxonomic scope" value="Bacteria"/>
</dbReference>
<dbReference type="HOGENOM" id="CLU_048975_0_1_0"/>
<dbReference type="OrthoDB" id="9795084at2"/>
<dbReference type="Proteomes" id="UP000002432">
    <property type="component" value="Chromosome"/>
</dbReference>
<dbReference type="GO" id="GO:0003690">
    <property type="term" value="F:double-stranded DNA binding"/>
    <property type="evidence" value="ECO:0007669"/>
    <property type="project" value="UniProtKB-UniRule"/>
</dbReference>
<dbReference type="GO" id="GO:0006310">
    <property type="term" value="P:DNA recombination"/>
    <property type="evidence" value="ECO:0007669"/>
    <property type="project" value="UniProtKB-KW"/>
</dbReference>
<dbReference type="GO" id="GO:0006303">
    <property type="term" value="P:double-strand break repair via nonhomologous end joining"/>
    <property type="evidence" value="ECO:0007669"/>
    <property type="project" value="UniProtKB-UniRule"/>
</dbReference>
<dbReference type="CDD" id="cd00789">
    <property type="entry name" value="KU_like"/>
    <property type="match status" value="1"/>
</dbReference>
<dbReference type="Gene3D" id="2.40.290.10">
    <property type="match status" value="1"/>
</dbReference>
<dbReference type="HAMAP" id="MF_01875">
    <property type="entry name" value="Prokaryotic_Ku"/>
    <property type="match status" value="1"/>
</dbReference>
<dbReference type="InterPro" id="IPR006164">
    <property type="entry name" value="Ku70/Ku80_beta-barrel_dom"/>
</dbReference>
<dbReference type="InterPro" id="IPR009187">
    <property type="entry name" value="Prok_Ku"/>
</dbReference>
<dbReference type="InterPro" id="IPR016194">
    <property type="entry name" value="SPOC-like_C_dom_sf"/>
</dbReference>
<dbReference type="NCBIfam" id="TIGR02772">
    <property type="entry name" value="Ku_bact"/>
    <property type="match status" value="1"/>
</dbReference>
<dbReference type="PANTHER" id="PTHR41251">
    <property type="entry name" value="NON-HOMOLOGOUS END JOINING PROTEIN KU"/>
    <property type="match status" value="1"/>
</dbReference>
<dbReference type="PANTHER" id="PTHR41251:SF1">
    <property type="entry name" value="NON-HOMOLOGOUS END JOINING PROTEIN KU"/>
    <property type="match status" value="1"/>
</dbReference>
<dbReference type="Pfam" id="PF02735">
    <property type="entry name" value="Ku"/>
    <property type="match status" value="1"/>
</dbReference>
<dbReference type="PIRSF" id="PIRSF006493">
    <property type="entry name" value="Prok_Ku"/>
    <property type="match status" value="1"/>
</dbReference>
<dbReference type="SMART" id="SM00559">
    <property type="entry name" value="Ku78"/>
    <property type="match status" value="1"/>
</dbReference>
<dbReference type="SUPFAM" id="SSF100939">
    <property type="entry name" value="SPOC domain-like"/>
    <property type="match status" value="1"/>
</dbReference>
<organism>
    <name type="scientific">Koribacter versatilis (strain Ellin345)</name>
    <dbReference type="NCBI Taxonomy" id="204669"/>
    <lineage>
        <taxon>Bacteria</taxon>
        <taxon>Pseudomonadati</taxon>
        <taxon>Acidobacteriota</taxon>
        <taxon>Terriglobia</taxon>
        <taxon>Terriglobales</taxon>
        <taxon>Candidatus Korobacteraceae</taxon>
        <taxon>Candidatus Korobacter</taxon>
    </lineage>
</organism>
<protein>
    <recommendedName>
        <fullName evidence="1">Non-homologous end joining protein Ku</fullName>
    </recommendedName>
</protein>
<accession>Q1INE2</accession>